<keyword id="KW-0002">3D-structure</keyword>
<keyword id="KW-0007">Acetylation</keyword>
<keyword id="KW-0025">Alternative splicing</keyword>
<keyword id="KW-0131">Cell cycle</keyword>
<keyword id="KW-0132">Cell division</keyword>
<keyword id="KW-0137">Centromere</keyword>
<keyword id="KW-0158">Chromosome</keyword>
<keyword id="KW-0175">Coiled coil</keyword>
<keyword id="KW-0963">Cytoplasm</keyword>
<keyword id="KW-0206">Cytoskeleton</keyword>
<keyword id="KW-0225">Disease variant</keyword>
<keyword id="KW-1017">Isopeptide bond</keyword>
<keyword id="KW-0995">Kinetochore</keyword>
<keyword id="KW-0498">Mitosis</keyword>
<keyword id="KW-0539">Nucleus</keyword>
<keyword id="KW-0597">Phosphoprotein</keyword>
<keyword id="KW-1267">Proteomics identification</keyword>
<keyword id="KW-1185">Reference proteome</keyword>
<keyword id="KW-0832">Ubl conjugation</keyword>
<comment type="function">
    <text evidence="2 12 15 16">Component of the spindle-assembly checkpoint that prevents the onset of anaphase until all chromosomes are properly aligned at the metaphase plate (PubMed:10049595, PubMed:20133940, PubMed:29162720). Forms a heterotetrameric complex with the closed conformation form of MAD2L1 (C-MAD2) at unattached kinetochores during prometaphase, recruits an open conformation of MAD2L1 (O-MAD2) and promotes the conversion of O-MAD2 to C-MAD2, which ensures mitotic checkpoint signaling (PubMed:29162720).</text>
</comment>
<comment type="function">
    <molecule>Isoform 3</molecule>
    <text evidence="10">Sequesters MAD2L1 in the cytoplasm preventing its function as an activator of the mitotic spindle assembly checkpoint (SAC) resulting in SAC impairment and chromosomal instability in hepatocellular carcinomas.</text>
</comment>
<comment type="subunit">
    <text evidence="3 7 8 9 10 11 12 13 14 15 17">Homodimer (PubMed:29162720, PubMed:9546394). Dimerizes via its N- and C- terminal regions (PubMed:29162720). Heterodimerizes with MAD2L1 in order to form a tetrameric MAD1L1-MAD2L1 core complex (PubMed:12006501, PubMed:18981471, PubMed:22351768, PubMed:9546394). Interacts with the closed conformation form of MAD2L1 (C-MAD2) and open conformation form of MAD2L1 (O-MAD2) (PubMed:29162720). It is unclear whether MAD1L1 dimerization promotes the conversion of closed to open conformation of MAD2L1 (PubMed:29162720). Formation of a heterotetrameric core complex containing two molecules each of MAD1L1 and of MAD2L1 promotes binding of another molecule of MAD2L1 to each MAD2L1, resulting in a heterohexamer (PubMed:12006501). Perturbation of the original MAD1L1-MAD2L1 structure by the spindle checkpoint may decrease MAD2L1 affinity for MAD1L1 (PubMed:12006501). CDC20 can compete with MAD1L1 for MAD2L1 binding, until the attachment and/or tension dampen the checkpoint signal, preventing further release of MAD2L1 on to CDC20 (PubMed:12006501). Also able to interact with the BUB1/BUB3 complex (PubMed:10198256). Interacts with NEK2 (PubMed:14978040). Interacts with TTK (PubMed:29162720). Interacts with TPR; the interactions occurs in a microtubule-independent manner (PubMed:18981471, PubMed:19273613, PubMed:20133940). Interacts with IK (PubMed:22351768). Interacts with the viral Tax protein (PubMed:9546394). Interacts with PRAP1 (PubMed:24374861).</text>
</comment>
<comment type="subunit">
    <molecule>Isoform 3</molecule>
    <text evidence="10 14">Interacts with MAD2L1; this interaction leads to the cytoplasmic sequestration of MAD2L1 (PubMed:19010891). Interacts with PRAP1 (PubMed:24374861).</text>
</comment>
<comment type="interaction">
    <interactant intactId="EBI-742610">
        <id>Q9Y6D9</id>
    </interactant>
    <interactant intactId="EBI-79934">
        <id>P09917</id>
        <label>ALOX5</label>
    </interactant>
    <organismsDiffer>false</organismsDiffer>
    <experiments>9</experiments>
</comment>
<comment type="interaction">
    <interactant intactId="EBI-742610">
        <id>Q9Y6D9</id>
    </interactant>
    <interactant intactId="EBI-1047414">
        <id>Q9H1Y0</id>
        <label>ATG5</label>
    </interactant>
    <organismsDiffer>false</organismsDiffer>
    <experiments>3</experiments>
</comment>
<comment type="interaction">
    <interactant intactId="EBI-742610">
        <id>Q9Y6D9</id>
    </interactant>
    <interactant intactId="EBI-356517">
        <id>Q9UL15</id>
        <label>BAG5</label>
    </interactant>
    <organismsDiffer>false</organismsDiffer>
    <experiments>9</experiments>
</comment>
<comment type="interaction">
    <interactant intactId="EBI-742610">
        <id>Q9Y6D9</id>
    </interactant>
    <interactant intactId="EBI-1765641">
        <id>Q9Y6W3</id>
        <label>CAPN7</label>
    </interactant>
    <organismsDiffer>false</organismsDiffer>
    <experiments>3</experiments>
</comment>
<comment type="interaction">
    <interactant intactId="EBI-742610">
        <id>Q9Y6D9</id>
    </interactant>
    <interactant intactId="EBI-10961624">
        <id>Q2TAC2-2</id>
        <label>CCDC57</label>
    </interactant>
    <organismsDiffer>false</organismsDiffer>
    <experiments>3</experiments>
</comment>
<comment type="interaction">
    <interactant intactId="EBI-742610">
        <id>Q9Y6D9</id>
    </interactant>
    <interactant intactId="EBI-10175300">
        <id>Q8TD31-3</id>
        <label>CCHCR1</label>
    </interactant>
    <organismsDiffer>false</organismsDiffer>
    <experiments>6</experiments>
</comment>
<comment type="interaction">
    <interactant intactId="EBI-742610">
        <id>Q9Y6D9</id>
    </interactant>
    <interactant intactId="EBI-295634">
        <id>Q16543</id>
        <label>CDC37</label>
    </interactant>
    <organismsDiffer>false</organismsDiffer>
    <experiments>3</experiments>
</comment>
<comment type="interaction">
    <interactant intactId="EBI-742610">
        <id>Q9Y6D9</id>
    </interactant>
    <interactant intactId="EBI-746238">
        <id>Q07002</id>
        <label>CDK18</label>
    </interactant>
    <organismsDiffer>false</organismsDiffer>
    <experiments>3</experiments>
</comment>
<comment type="interaction">
    <interactant intactId="EBI-742610">
        <id>Q9Y6D9</id>
    </interactant>
    <interactant intactId="EBI-1375040">
        <id>Q02224</id>
        <label>CENPE</label>
    </interactant>
    <organismsDiffer>false</organismsDiffer>
    <experiments>3</experiments>
</comment>
<comment type="interaction">
    <interactant intactId="EBI-742610">
        <id>Q9Y6D9</id>
    </interactant>
    <interactant intactId="EBI-12093053">
        <id>O43247-2</id>
        <label>CIMIP4</label>
    </interactant>
    <organismsDiffer>false</organismsDiffer>
    <experiments>3</experiments>
</comment>
<comment type="interaction">
    <interactant intactId="EBI-742610">
        <id>Q9Y6D9</id>
    </interactant>
    <interactant intactId="EBI-5453285">
        <id>Q2TBE0</id>
        <label>CWF19L2</label>
    </interactant>
    <organismsDiffer>false</organismsDiffer>
    <experiments>6</experiments>
</comment>
<comment type="interaction">
    <interactant intactId="EBI-742610">
        <id>Q9Y6D9</id>
    </interactant>
    <interactant intactId="EBI-6658203">
        <id>Q86YD7</id>
        <label>FAM90A1</label>
    </interactant>
    <organismsDiffer>false</organismsDiffer>
    <experiments>3</experiments>
</comment>
<comment type="interaction">
    <interactant intactId="EBI-742610">
        <id>Q9Y6D9</id>
    </interactant>
    <interactant intactId="EBI-1052570">
        <id>O95995</id>
        <label>GAS8</label>
    </interactant>
    <organismsDiffer>false</organismsDiffer>
    <experiments>3</experiments>
</comment>
<comment type="interaction">
    <interactant intactId="EBI-742610">
        <id>Q9Y6D9</id>
    </interactant>
    <interactant intactId="EBI-746309">
        <id>Q92917</id>
        <label>GPKOW</label>
    </interactant>
    <organismsDiffer>false</organismsDiffer>
    <experiments>3</experiments>
</comment>
<comment type="interaction">
    <interactant intactId="EBI-742610">
        <id>Q9Y6D9</id>
    </interactant>
    <interactant intactId="EBI-2514791">
        <id>Q96CS2</id>
        <label>HAUS1</label>
    </interactant>
    <organismsDiffer>false</organismsDiffer>
    <experiments>3</experiments>
</comment>
<comment type="interaction">
    <interactant intactId="EBI-742610">
        <id>Q9Y6D9</id>
    </interactant>
    <interactant intactId="EBI-8472129">
        <id>Q9HAQ2</id>
        <label>KIF9</label>
    </interactant>
    <organismsDiffer>false</organismsDiffer>
    <experiments>3</experiments>
</comment>
<comment type="interaction">
    <interactant intactId="EBI-742610">
        <id>Q9Y6D9</id>
    </interactant>
    <interactant intactId="EBI-726510">
        <id>Q96BZ8</id>
        <label>LENG1</label>
    </interactant>
    <organismsDiffer>false</organismsDiffer>
    <experiments>3</experiments>
</comment>
<comment type="interaction">
    <interactant intactId="EBI-742610">
        <id>Q9Y6D9</id>
    </interactant>
    <interactant intactId="EBI-10241423">
        <id>Q3ZCW2</id>
        <label>LGALSL</label>
    </interactant>
    <organismsDiffer>false</organismsDiffer>
    <experiments>6</experiments>
</comment>
<comment type="interaction">
    <interactant intactId="EBI-742610">
        <id>Q9Y6D9</id>
    </interactant>
    <interactant intactId="EBI-8639312">
        <id>P25800</id>
        <label>LMO1</label>
    </interactant>
    <organismsDiffer>false</organismsDiffer>
    <experiments>3</experiments>
</comment>
<comment type="interaction">
    <interactant intactId="EBI-742610">
        <id>Q9Y6D9</id>
    </interactant>
    <interactant intactId="EBI-11742507">
        <id>Q8TAP4-4</id>
        <label>LMO3</label>
    </interactant>
    <organismsDiffer>false</organismsDiffer>
    <experiments>3</experiments>
</comment>
<comment type="interaction">
    <interactant intactId="EBI-742610">
        <id>Q9Y6D9</id>
    </interactant>
    <interactant intactId="EBI-739832">
        <id>Q8TBB1</id>
        <label>LNX1</label>
    </interactant>
    <organismsDiffer>false</organismsDiffer>
    <experiments>3</experiments>
</comment>
<comment type="interaction">
    <interactant intactId="EBI-742610">
        <id>Q9Y6D9</id>
    </interactant>
    <interactant intactId="EBI-742610">
        <id>Q9Y6D9</id>
        <label>MAD1L1</label>
    </interactant>
    <organismsDiffer>false</organismsDiffer>
    <experiments>11</experiments>
</comment>
<comment type="interaction">
    <interactant intactId="EBI-742610">
        <id>Q9Y6D9</id>
    </interactant>
    <interactant intactId="EBI-78203">
        <id>Q13257</id>
        <label>MAD2L1</label>
    </interactant>
    <organismsDiffer>false</organismsDiffer>
    <experiments>50</experiments>
</comment>
<comment type="interaction">
    <interactant intactId="EBI-742610">
        <id>Q9Y6D9</id>
    </interactant>
    <interactant intactId="EBI-1048159">
        <id>P55081</id>
        <label>MFAP1</label>
    </interactant>
    <organismsDiffer>false</organismsDiffer>
    <experiments>6</experiments>
</comment>
<comment type="interaction">
    <interactant intactId="EBI-742610">
        <id>Q9Y6D9</id>
    </interactant>
    <interactant intactId="EBI-2880203">
        <id>O76041</id>
        <label>NEBL</label>
    </interactant>
    <organismsDiffer>false</organismsDiffer>
    <experiments>7</experiments>
</comment>
<comment type="interaction">
    <interactant intactId="EBI-742610">
        <id>Q9Y6D9</id>
    </interactant>
    <interactant intactId="EBI-741158">
        <id>Q96HA8</id>
        <label>NTAQ1</label>
    </interactant>
    <organismsDiffer>false</organismsDiffer>
    <experiments>3</experiments>
</comment>
<comment type="interaction">
    <interactant intactId="EBI-742610">
        <id>Q9Y6D9</id>
    </interactant>
    <interactant intactId="EBI-14066006">
        <id>Q4G0R1</id>
        <label>PIBF1</label>
    </interactant>
    <organismsDiffer>false</organismsDiffer>
    <experiments>3</experiments>
</comment>
<comment type="interaction">
    <interactant intactId="EBI-742610">
        <id>Q9Y6D9</id>
    </interactant>
    <interactant intactId="EBI-2557469">
        <id>Q6NYC8</id>
        <label>PPP1R18</label>
    </interactant>
    <organismsDiffer>false</organismsDiffer>
    <experiments>3</experiments>
</comment>
<comment type="interaction">
    <interactant intactId="EBI-742610">
        <id>Q9Y6D9</id>
    </interactant>
    <interactant intactId="EBI-359352">
        <id>P25786</id>
        <label>PSMA1</label>
    </interactant>
    <organismsDiffer>false</organismsDiffer>
    <experiments>3</experiments>
</comment>
<comment type="interaction">
    <interactant intactId="EBI-742610">
        <id>Q9Y6D9</id>
    </interactant>
    <interactant intactId="EBI-373337">
        <id>O76064</id>
        <label>RNF8</label>
    </interactant>
    <organismsDiffer>false</organismsDiffer>
    <experiments>7</experiments>
</comment>
<comment type="interaction">
    <interactant intactId="EBI-742610">
        <id>Q9Y6D9</id>
    </interactant>
    <interactant intactId="EBI-11334239">
        <id>Q8TC71</id>
        <label>SPATA18</label>
    </interactant>
    <organismsDiffer>false</organismsDiffer>
    <experiments>3</experiments>
</comment>
<comment type="interaction">
    <interactant intactId="EBI-742610">
        <id>Q9Y6D9</id>
    </interactant>
    <interactant intactId="EBI-744066">
        <id>Q9UM82</id>
        <label>SPATA2</label>
    </interactant>
    <organismsDiffer>false</organismsDiffer>
    <experiments>3</experiments>
</comment>
<comment type="interaction">
    <interactant intactId="EBI-742610">
        <id>Q9Y6D9</id>
    </interactant>
    <interactant intactId="EBI-745392">
        <id>Q9BSW7</id>
        <label>SYT17</label>
    </interactant>
    <organismsDiffer>false</organismsDiffer>
    <experiments>3</experiments>
</comment>
<comment type="interaction">
    <interactant intactId="EBI-742610">
        <id>Q9Y6D9</id>
    </interactant>
    <interactant intactId="EBI-10246152">
        <id>Q5T7P8-2</id>
        <label>SYT6</label>
    </interactant>
    <organismsDiffer>false</organismsDiffer>
    <experiments>3</experiments>
</comment>
<comment type="interaction">
    <interactant intactId="EBI-742610">
        <id>Q9Y6D9</id>
    </interactant>
    <interactant intactId="EBI-11974855">
        <id>Q9Y4C2-2</id>
        <label>TCAF1</label>
    </interactant>
    <organismsDiffer>false</organismsDiffer>
    <experiments>3</experiments>
</comment>
<comment type="interaction">
    <interactant intactId="EBI-742610">
        <id>Q9Y6D9</id>
    </interactant>
    <interactant intactId="EBI-351158">
        <id>P09493</id>
        <label>TPM1</label>
    </interactant>
    <organismsDiffer>false</organismsDiffer>
    <experiments>7</experiments>
</comment>
<comment type="interaction">
    <interactant intactId="EBI-742610">
        <id>Q9Y6D9</id>
    </interactant>
    <interactant intactId="EBI-12123928">
        <id>P09493-10</id>
        <label>TPM1</label>
    </interactant>
    <organismsDiffer>false</organismsDiffer>
    <experiments>6</experiments>
</comment>
<comment type="interaction">
    <interactant intactId="EBI-742610">
        <id>Q9Y6D9</id>
    </interactant>
    <interactant intactId="EBI-355607">
        <id>P06753</id>
        <label>TPM3</label>
    </interactant>
    <organismsDiffer>false</organismsDiffer>
    <experiments>10</experiments>
</comment>
<comment type="interaction">
    <interactant intactId="EBI-742610">
        <id>Q9Y6D9</id>
    </interactant>
    <interactant intactId="EBI-10184033">
        <id>Q5VU62</id>
        <label>TPM3</label>
    </interactant>
    <organismsDiffer>false</organismsDiffer>
    <experiments>3</experiments>
</comment>
<comment type="interaction">
    <interactant intactId="EBI-742610">
        <id>Q9Y6D9</id>
    </interactant>
    <interactant intactId="EBI-1048528">
        <id>P12270</id>
        <label>TPR</label>
    </interactant>
    <organismsDiffer>false</organismsDiffer>
    <experiments>2</experiments>
</comment>
<comment type="interaction">
    <interactant intactId="EBI-742610">
        <id>Q9Y6D9</id>
    </interactant>
    <interactant intactId="EBI-702370">
        <id>Q14134</id>
        <label>TRIM29</label>
    </interactant>
    <organismsDiffer>false</organismsDiffer>
    <experiments>7</experiments>
</comment>
<comment type="interaction">
    <interactant intactId="EBI-742610">
        <id>Q9Y6D9</id>
    </interactant>
    <interactant intactId="EBI-750174">
        <id>Q99576</id>
        <label>TSC22D3</label>
    </interactant>
    <organismsDiffer>false</organismsDiffer>
    <experiments>3</experiments>
</comment>
<comment type="interaction">
    <interactant intactId="EBI-742610">
        <id>Q9Y6D9</id>
    </interactant>
    <interactant intactId="EBI-10294415">
        <id>Q99576-3</id>
        <label>TSC22D3</label>
    </interactant>
    <organismsDiffer>false</organismsDiffer>
    <experiments>3</experiments>
</comment>
<comment type="interaction">
    <interactant intactId="EBI-742610">
        <id>Q9Y6D9</id>
    </interactant>
    <interactant intactId="EBI-744794">
        <id>Q9BZW7</id>
        <label>TSGA10</label>
    </interactant>
    <organismsDiffer>false</organismsDiffer>
    <experiments>3</experiments>
</comment>
<comment type="interaction">
    <interactant intactId="EBI-742610">
        <id>Q9Y6D9</id>
    </interactant>
    <interactant intactId="EBI-9053916">
        <id>Q63HK5</id>
        <label>TSHZ3</label>
    </interactant>
    <organismsDiffer>false</organismsDiffer>
    <experiments>3</experiments>
</comment>
<comment type="interaction">
    <interactant intactId="EBI-742610">
        <id>Q9Y6D9</id>
    </interactant>
    <interactant intactId="EBI-1043104">
        <id>Q9Y4E8</id>
        <label>USP15</label>
    </interactant>
    <organismsDiffer>false</organismsDiffer>
    <experiments>3</experiments>
</comment>
<comment type="interaction">
    <interactant intactId="EBI-742610">
        <id>Q9Y6D9</id>
    </interactant>
    <interactant intactId="EBI-12041225">
        <id>Q9Y4E8-2</id>
        <label>USP15</label>
    </interactant>
    <organismsDiffer>false</organismsDiffer>
    <experiments>3</experiments>
</comment>
<comment type="interaction">
    <interactant intactId="EBI-742610">
        <id>Q9Y6D9</id>
    </interactant>
    <interactant intactId="EBI-10300345">
        <id>Q9BW85</id>
        <label>YJU2</label>
    </interactant>
    <organismsDiffer>false</organismsDiffer>
    <experiments>3</experiments>
</comment>
<comment type="interaction">
    <interactant intactId="EBI-742610">
        <id>Q9Y6D9</id>
    </interactant>
    <interactant intactId="EBI-739949">
        <id>Q9NX65</id>
        <label>ZSCAN32</label>
    </interactant>
    <organismsDiffer>false</organismsDiffer>
    <experiments>3</experiments>
</comment>
<comment type="interaction">
    <interactant intactId="EBI-742610">
        <id>Q9Y6D9</id>
    </interactant>
    <interactant intactId="EBI-25475920">
        <id>PRO_0000449631</id>
        <label>rep</label>
        <dbReference type="UniProtKB" id="P0DTD1"/>
    </interactant>
    <organismsDiffer>true</organismsDiffer>
    <experiments>3</experiments>
</comment>
<comment type="subcellular location">
    <subcellularLocation>
        <location evidence="10 17">Nucleus</location>
    </subcellularLocation>
    <subcellularLocation>
        <location evidence="8 9 13 15">Chromosome</location>
        <location evidence="8 9 13 15">Centromere</location>
        <location evidence="8 9 13 15">Kinetochore</location>
    </subcellularLocation>
    <subcellularLocation>
        <location evidence="9 13">Nucleus envelope</location>
    </subcellularLocation>
    <subcellularLocation>
        <location evidence="8 17">Cytoplasm</location>
        <location evidence="8 17">Cytoskeleton</location>
        <location evidence="8 17">Microtubule organizing center</location>
        <location evidence="8 17">Centrosome</location>
    </subcellularLocation>
    <subcellularLocation>
        <location evidence="17">Cytoplasm</location>
        <location evidence="17">Cytoskeleton</location>
        <location evidence="17">Spindle</location>
    </subcellularLocation>
    <subcellularLocation>
        <location evidence="13">Cytoplasm</location>
        <location evidence="13">Cytoskeleton</location>
        <location evidence="13">Spindle pole</location>
    </subcellularLocation>
    <text evidence="8 9 13 15 17">Co-localizes with TPR at the nucleus envelope during interphase and throughout the cell cycle (PubMed:18981471, PubMed:22351768). From the beginning to the end of mitosis, it is seen to move from a diffusely nuclear distribution to the centrosome, to the spindle midzone and finally to the midbody (PubMed:9546394). Localizes to kinetochores during prometaphase (PubMed:22351768, PubMed:29162720). Does not localize to kinetochores during metaphase (PubMed:29162720). Colocalizes with NEK2 at the kinetochore (PubMed:14978040). Colocalizes with IK at spindle poles during metaphase and anaphase (PubMed:22351768).</text>
</comment>
<comment type="subcellular location">
    <molecule>Isoform 3</molecule>
    <subcellularLocation>
        <location evidence="10">Cytoplasm</location>
    </subcellularLocation>
</comment>
<comment type="alternative products">
    <event type="alternative splicing"/>
    <isoform>
        <id>Q9Y6D9-1</id>
        <name>1</name>
        <name evidence="19">MAD1-alpha</name>
        <sequence type="displayed"/>
    </isoform>
    <isoform>
        <id>Q9Y6D9-3</id>
        <name>2</name>
        <sequence type="described" ref="VSP_056160 VSP_056161"/>
    </isoform>
    <isoform>
        <id>Q9Y6D9-4</id>
        <name>3</name>
        <name evidence="19">MAD1-beta</name>
        <sequence type="described" ref="VSP_061075"/>
    </isoform>
</comment>
<comment type="tissue specificity">
    <molecule>Isoform 1</molecule>
    <text evidence="10 14">Expressed in hepatocellular carcinomas and hepatoma cell lines (at protein level).</text>
</comment>
<comment type="tissue specificity">
    <molecule>Isoform 3</molecule>
    <text evidence="10">Expressed in hepatocellular carcinomas and hepatoma cell lines (at protein level).</text>
</comment>
<comment type="induction">
    <text evidence="2">Increased by p53/TP53.</text>
</comment>
<comment type="PTM">
    <text evidence="3 15 17">Phosphorylated; by BUB1 (PubMed:10198256). Become hyperphosphorylated in late S through M phases or after mitotic spindle damage (PubMed:9546394). Phosphorylated; by TTK (PubMed:29162720).</text>
</comment>
<comment type="disease" evidence="16">
    <disease id="DI-06585">
        <name>Mosaic variegated aneuploidy syndrome 7 with inflammation and tumor predisposition</name>
        <acronym>MVA7</acronym>
        <description>A form of mosaic variegated aneuploidy syndrome, a severe disorder characterized by mosaic aneuploidies, predominantly trisomies and monosomies, involving multiple different chromosomes and tissues. Affected individuals typically present with severe intrauterine growth retardation and microcephaly. Eye anomalies, mild dysmorphism, variable developmental delay, and a broad spectrum of additional congenital abnormalities and medical conditions may also occur. The risk of malignancy is high, with rhabdomyosarcoma, Wilms tumor and leukemia reported in several cases. MVA7 is an autosomal recessive form characterized by increased susceptibility to benign and malignant neoplasms beginning in early childhood. Affected individuals show dysmorphic facies and may have early developmental delay.</description>
        <dbReference type="MIM" id="620189"/>
    </disease>
    <text>The disease may be caused by variants affecting the gene represented in this entry.</text>
</comment>
<comment type="disease">
    <text evidence="5 6">Defects in MAD1L1 are involved in the development and/or progression of various types of cancer.</text>
</comment>
<comment type="similarity">
    <text evidence="20">Belongs to the MAD1 family.</text>
</comment>
<comment type="sequence caution" evidence="20">
    <conflict type="frameshift">
        <sequence resource="EMBL-CDS" id="AAC52059"/>
    </conflict>
</comment>
<accession>Q9Y6D9</accession>
<accession>B3KR41</accession>
<accession>Q13312</accession>
<accession>Q75MI0</accession>
<accession>Q86UM4</accession>
<accession>Q9UNH0</accession>
<protein>
    <recommendedName>
        <fullName>Mitotic spindle assembly checkpoint protein MAD1</fullName>
    </recommendedName>
    <alternativeName>
        <fullName>Mitotic arrest deficient 1-like protein 1</fullName>
        <shortName>MAD1-like protein 1</shortName>
    </alternativeName>
    <alternativeName>
        <fullName>Mitotic checkpoint MAD1 protein homolog</fullName>
        <shortName>HsMAD1</shortName>
        <shortName>hMAD1</shortName>
    </alternativeName>
    <alternativeName>
        <fullName>Tax-binding protein 181</fullName>
    </alternativeName>
</protein>
<sequence>MEDLGENTMVLSTLRSLNNFISQRVEGGSGLDISTSAPGSLQMQYQQSMQLEERAEQIRSKSHLIQVEREKMQMELSHKRARVELERAASTSARNYEREVDRNQELLTRIRQLQEREAGAEEKMQEQLERNRQCQQNLDAASKRLREKEDSLAQAGETINALKGRISELQWSVMDQEMRVKRLESEKQELQEQLDLQHKKCQEANQKIQELQASQEARADHEQQIKDLEQKLSLQEQDAAIVKNMKSELVRLPRLERELKQLREESAHLREMRETNGLLQEELEGLQRKLGRQEKMQETLVGLELENERLLAKLQSWERLDQTMGLSIRTPEDLSRFVVELQQRELALKDKNSAVTSSARGLEKARQQLQEELRQVSGQLLEERKKRETHEALARRLQKRVLLLTKERDGMRAILGSYDSELTPAEYSPQLTRRMREAEDMVQKVHSHSAEMEAQLSQALEELGGQKQRADMLEMELKMLKSQSSSAEQSFLFSREEADTLRLKVEELEGERSRLEEEKRMLEAQLERRALQGDYDQSRTKVLHMSLNPTSVARQRLREDHSQLQAECERLRGLLRAMERGGTVPADLEAAAASLPSSKEVAELKKQVESAELKNQRLKEVFQTKIQEFRKACYTLTGYQIDITTENQYRLTSLYAEHPGDCLIFKATSPSGSKMQLLETEFSHTVGELIEVHLRRQDSIPAFLSSLTLELFSRQTVA</sequence>
<gene>
    <name type="primary">MAD1L1</name>
    <name type="synonym">MAD1</name>
    <name type="synonym">TXBP181</name>
</gene>
<evidence type="ECO:0000255" key="1"/>
<evidence type="ECO:0000269" key="2">
    <source>
    </source>
</evidence>
<evidence type="ECO:0000269" key="3">
    <source>
    </source>
</evidence>
<evidence type="ECO:0000269" key="4">
    <source>
    </source>
</evidence>
<evidence type="ECO:0000269" key="5">
    <source>
    </source>
</evidence>
<evidence type="ECO:0000269" key="6">
    <source>
    </source>
</evidence>
<evidence type="ECO:0000269" key="7">
    <source>
    </source>
</evidence>
<evidence type="ECO:0000269" key="8">
    <source>
    </source>
</evidence>
<evidence type="ECO:0000269" key="9">
    <source>
    </source>
</evidence>
<evidence type="ECO:0000269" key="10">
    <source>
    </source>
</evidence>
<evidence type="ECO:0000269" key="11">
    <source>
    </source>
</evidence>
<evidence type="ECO:0000269" key="12">
    <source>
    </source>
</evidence>
<evidence type="ECO:0000269" key="13">
    <source>
    </source>
</evidence>
<evidence type="ECO:0000269" key="14">
    <source>
    </source>
</evidence>
<evidence type="ECO:0000269" key="15">
    <source>
    </source>
</evidence>
<evidence type="ECO:0000269" key="16">
    <source>
    </source>
</evidence>
<evidence type="ECO:0000269" key="17">
    <source>
    </source>
</evidence>
<evidence type="ECO:0000303" key="18">
    <source>
    </source>
</evidence>
<evidence type="ECO:0000303" key="19">
    <source>
    </source>
</evidence>
<evidence type="ECO:0000305" key="20"/>
<evidence type="ECO:0000305" key="21">
    <source>
    </source>
</evidence>
<evidence type="ECO:0007744" key="22">
    <source>
    </source>
</evidence>
<evidence type="ECO:0007744" key="23">
    <source>
    </source>
</evidence>
<evidence type="ECO:0007744" key="24">
    <source>
    </source>
</evidence>
<evidence type="ECO:0007744" key="25">
    <source>
    </source>
</evidence>
<evidence type="ECO:0007744" key="26">
    <source>
    </source>
</evidence>
<evidence type="ECO:0007744" key="27">
    <source>
    </source>
</evidence>
<evidence type="ECO:0007744" key="28">
    <source>
    </source>
</evidence>
<evidence type="ECO:0007744" key="29">
    <source>
    </source>
</evidence>
<evidence type="ECO:0007744" key="30">
    <source>
    </source>
</evidence>
<evidence type="ECO:0007744" key="31">
    <source>
    </source>
</evidence>
<evidence type="ECO:0007829" key="32">
    <source>
        <dbReference type="PDB" id="1GO4"/>
    </source>
</evidence>
<evidence type="ECO:0007829" key="33">
    <source>
        <dbReference type="PDB" id="7B1F"/>
    </source>
</evidence>
<evidence type="ECO:0007829" key="34">
    <source>
        <dbReference type="PDB" id="7B1H"/>
    </source>
</evidence>
<evidence type="ECO:0007829" key="35">
    <source>
        <dbReference type="PDB" id="7B1J"/>
    </source>
</evidence>
<name>MD1L1_HUMAN</name>
<proteinExistence type="evidence at protein level"/>
<dbReference type="EMBL" id="U33822">
    <property type="protein sequence ID" value="AAC52059.1"/>
    <property type="status" value="ALT_FRAME"/>
    <property type="molecule type" value="mRNA"/>
</dbReference>
<dbReference type="EMBL" id="AF123318">
    <property type="protein sequence ID" value="AAD20359.1"/>
    <property type="molecule type" value="mRNA"/>
</dbReference>
<dbReference type="EMBL" id="AF083811">
    <property type="protein sequence ID" value="AAD24498.1"/>
    <property type="molecule type" value="mRNA"/>
</dbReference>
<dbReference type="EMBL" id="AK090959">
    <property type="protein sequence ID" value="BAG52253.1"/>
    <property type="molecule type" value="mRNA"/>
</dbReference>
<dbReference type="EMBL" id="AC005282">
    <property type="status" value="NOT_ANNOTATED_CDS"/>
    <property type="molecule type" value="Genomic_DNA"/>
</dbReference>
<dbReference type="EMBL" id="AC006433">
    <property type="status" value="NOT_ANNOTATED_CDS"/>
    <property type="molecule type" value="Genomic_DNA"/>
</dbReference>
<dbReference type="EMBL" id="AC069288">
    <property type="protein sequence ID" value="AAS07503.1"/>
    <property type="molecule type" value="Genomic_DNA"/>
</dbReference>
<dbReference type="EMBL" id="AC104129">
    <property type="protein sequence ID" value="AAP21876.1"/>
    <property type="molecule type" value="Genomic_DNA"/>
</dbReference>
<dbReference type="EMBL" id="AC110781">
    <property type="status" value="NOT_ANNOTATED_CDS"/>
    <property type="molecule type" value="Genomic_DNA"/>
</dbReference>
<dbReference type="EMBL" id="BC009964">
    <property type="protein sequence ID" value="AAH09964.1"/>
    <property type="molecule type" value="mRNA"/>
</dbReference>
<dbReference type="CCDS" id="CCDS43539.1">
    <molecule id="Q9Y6D9-1"/>
</dbReference>
<dbReference type="CCDS" id="CCDS78201.1">
    <molecule id="Q9Y6D9-3"/>
</dbReference>
<dbReference type="RefSeq" id="NP_001013858.1">
    <molecule id="Q9Y6D9-1"/>
    <property type="nucleotide sequence ID" value="NM_001013836.2"/>
</dbReference>
<dbReference type="RefSeq" id="NP_001013859.1">
    <molecule id="Q9Y6D9-1"/>
    <property type="nucleotide sequence ID" value="NM_001013837.2"/>
</dbReference>
<dbReference type="RefSeq" id="NP_001291452.1">
    <molecule id="Q9Y6D9-1"/>
    <property type="nucleotide sequence ID" value="NM_001304523.2"/>
</dbReference>
<dbReference type="RefSeq" id="NP_001291453.1">
    <molecule id="Q9Y6D9-3"/>
    <property type="nucleotide sequence ID" value="NM_001304524.2"/>
</dbReference>
<dbReference type="RefSeq" id="NP_003541.2">
    <molecule id="Q9Y6D9-1"/>
    <property type="nucleotide sequence ID" value="NM_003550.3"/>
</dbReference>
<dbReference type="RefSeq" id="XP_005249934.1">
    <property type="nucleotide sequence ID" value="XM_005249877.1"/>
</dbReference>
<dbReference type="PDB" id="1GO4">
    <property type="method" value="X-ray"/>
    <property type="resolution" value="2.05 A"/>
    <property type="chains" value="E/F/G/H=485-584"/>
</dbReference>
<dbReference type="PDB" id="4DZO">
    <property type="method" value="X-ray"/>
    <property type="resolution" value="1.76 A"/>
    <property type="chains" value="A/B=597-718"/>
</dbReference>
<dbReference type="PDB" id="7B1F">
    <property type="method" value="X-ray"/>
    <property type="resolution" value="1.75 A"/>
    <property type="chains" value="A/B=597-718"/>
</dbReference>
<dbReference type="PDB" id="7B1H">
    <property type="method" value="X-ray"/>
    <property type="resolution" value="2.40 A"/>
    <property type="chains" value="A/B/E/F=597-718"/>
</dbReference>
<dbReference type="PDB" id="7B1J">
    <property type="method" value="X-ray"/>
    <property type="resolution" value="2.90 A"/>
    <property type="chains" value="A/B=597-718"/>
</dbReference>
<dbReference type="PDBsum" id="1GO4"/>
<dbReference type="PDBsum" id="4DZO"/>
<dbReference type="PDBsum" id="7B1F"/>
<dbReference type="PDBsum" id="7B1H"/>
<dbReference type="PDBsum" id="7B1J"/>
<dbReference type="SMR" id="Q9Y6D9"/>
<dbReference type="BioGRID" id="113971">
    <property type="interactions" value="152"/>
</dbReference>
<dbReference type="ComplexPortal" id="CPX-82">
    <property type="entry name" value="Mitotic spindle assembly checkpoint Mad1 complex"/>
</dbReference>
<dbReference type="ComplexPortal" id="CPX-85">
    <property type="entry name" value="Mitotic spindle assembly checkpoint MAD1-MAD2 complex"/>
</dbReference>
<dbReference type="CORUM" id="Q9Y6D9"/>
<dbReference type="DIP" id="DIP-29654N"/>
<dbReference type="ELM" id="Q9Y6D9"/>
<dbReference type="FunCoup" id="Q9Y6D9">
    <property type="interactions" value="2235"/>
</dbReference>
<dbReference type="IntAct" id="Q9Y6D9">
    <property type="interactions" value="96"/>
</dbReference>
<dbReference type="MINT" id="Q9Y6D9"/>
<dbReference type="STRING" id="9606.ENSP00000385334"/>
<dbReference type="GlyGen" id="Q9Y6D9">
    <property type="glycosylation" value="1 site, 1 O-linked glycan (1 site)"/>
</dbReference>
<dbReference type="iPTMnet" id="Q9Y6D9"/>
<dbReference type="MetOSite" id="Q9Y6D9"/>
<dbReference type="PhosphoSitePlus" id="Q9Y6D9"/>
<dbReference type="BioMuta" id="MAD1L1"/>
<dbReference type="DMDM" id="52783153"/>
<dbReference type="jPOST" id="Q9Y6D9"/>
<dbReference type="MassIVE" id="Q9Y6D9"/>
<dbReference type="PaxDb" id="9606-ENSP00000385334"/>
<dbReference type="PeptideAtlas" id="Q9Y6D9"/>
<dbReference type="ProteomicsDB" id="3578"/>
<dbReference type="ProteomicsDB" id="86656">
    <molecule id="Q9Y6D9-1"/>
</dbReference>
<dbReference type="Pumba" id="Q9Y6D9"/>
<dbReference type="Antibodypedia" id="1135">
    <property type="antibodies" value="406 antibodies from 38 providers"/>
</dbReference>
<dbReference type="DNASU" id="8379"/>
<dbReference type="Ensembl" id="ENST00000265854.12">
    <molecule id="Q9Y6D9-1"/>
    <property type="protein sequence ID" value="ENSP00000265854.7"/>
    <property type="gene ID" value="ENSG00000002822.16"/>
</dbReference>
<dbReference type="Ensembl" id="ENST00000399654.6">
    <molecule id="Q9Y6D9-1"/>
    <property type="protein sequence ID" value="ENSP00000382562.2"/>
    <property type="gene ID" value="ENSG00000002822.16"/>
</dbReference>
<dbReference type="Ensembl" id="ENST00000402746.5">
    <molecule id="Q9Y6D9-3"/>
    <property type="protein sequence ID" value="ENSP00000384155.1"/>
    <property type="gene ID" value="ENSG00000002822.16"/>
</dbReference>
<dbReference type="Ensembl" id="ENST00000406869.5">
    <molecule id="Q9Y6D9-1"/>
    <property type="protein sequence ID" value="ENSP00000385334.1"/>
    <property type="gene ID" value="ENSG00000002822.16"/>
</dbReference>
<dbReference type="GeneID" id="8379"/>
<dbReference type="KEGG" id="hsa:8379"/>
<dbReference type="MANE-Select" id="ENST00000265854.12">
    <property type="protein sequence ID" value="ENSP00000265854.7"/>
    <property type="RefSeq nucleotide sequence ID" value="NM_001013836.2"/>
    <property type="RefSeq protein sequence ID" value="NP_001013858.1"/>
</dbReference>
<dbReference type="UCSC" id="uc003slf.2">
    <molecule id="Q9Y6D9-1"/>
    <property type="organism name" value="human"/>
</dbReference>
<dbReference type="AGR" id="HGNC:6762"/>
<dbReference type="CTD" id="8379"/>
<dbReference type="DisGeNET" id="8379"/>
<dbReference type="GeneCards" id="MAD1L1"/>
<dbReference type="HGNC" id="HGNC:6762">
    <property type="gene designation" value="MAD1L1"/>
</dbReference>
<dbReference type="HPA" id="ENSG00000002822">
    <property type="expression patterns" value="Low tissue specificity"/>
</dbReference>
<dbReference type="MalaCards" id="MAD1L1"/>
<dbReference type="MIM" id="602686">
    <property type="type" value="gene"/>
</dbReference>
<dbReference type="MIM" id="620189">
    <property type="type" value="phenotype"/>
</dbReference>
<dbReference type="neXtProt" id="NX_Q9Y6D9"/>
<dbReference type="OpenTargets" id="ENSG00000002822"/>
<dbReference type="PharmGKB" id="PA372"/>
<dbReference type="VEuPathDB" id="HostDB:ENSG00000002822"/>
<dbReference type="eggNOG" id="KOG4593">
    <property type="taxonomic scope" value="Eukaryota"/>
</dbReference>
<dbReference type="GeneTree" id="ENSGT00390000001316"/>
<dbReference type="HOGENOM" id="CLU_023576_1_0_1"/>
<dbReference type="InParanoid" id="Q9Y6D9"/>
<dbReference type="OMA" id="YKLDFMP"/>
<dbReference type="OrthoDB" id="331602at2759"/>
<dbReference type="PAN-GO" id="Q9Y6D9">
    <property type="GO annotations" value="4 GO annotations based on evolutionary models"/>
</dbReference>
<dbReference type="PhylomeDB" id="Q9Y6D9"/>
<dbReference type="TreeFam" id="TF101083"/>
<dbReference type="PathwayCommons" id="Q9Y6D9"/>
<dbReference type="Reactome" id="R-HSA-141444">
    <property type="pathway name" value="Amplification of signal from unattached kinetochores via a MAD2 inhibitory signal"/>
</dbReference>
<dbReference type="Reactome" id="R-HSA-2467813">
    <property type="pathway name" value="Separation of Sister Chromatids"/>
</dbReference>
<dbReference type="Reactome" id="R-HSA-2500257">
    <property type="pathway name" value="Resolution of Sister Chromatid Cohesion"/>
</dbReference>
<dbReference type="Reactome" id="R-HSA-5663220">
    <property type="pathway name" value="RHO GTPases Activate Formins"/>
</dbReference>
<dbReference type="Reactome" id="R-HSA-68877">
    <property type="pathway name" value="Mitotic Prometaphase"/>
</dbReference>
<dbReference type="Reactome" id="R-HSA-9648025">
    <property type="pathway name" value="EML4 and NUDC in mitotic spindle formation"/>
</dbReference>
<dbReference type="SignaLink" id="Q9Y6D9"/>
<dbReference type="SIGNOR" id="Q9Y6D9"/>
<dbReference type="BioGRID-ORCS" id="8379">
    <property type="hits" value="53 hits in 1157 CRISPR screens"/>
</dbReference>
<dbReference type="CD-CODE" id="8C2F96ED">
    <property type="entry name" value="Centrosome"/>
</dbReference>
<dbReference type="ChiTaRS" id="MAD1L1">
    <property type="organism name" value="human"/>
</dbReference>
<dbReference type="EvolutionaryTrace" id="Q9Y6D9"/>
<dbReference type="GeneWiki" id="Mad1"/>
<dbReference type="GenomeRNAi" id="8379"/>
<dbReference type="Pharos" id="Q9Y6D9">
    <property type="development level" value="Tbio"/>
</dbReference>
<dbReference type="PRO" id="PR:Q9Y6D9"/>
<dbReference type="Proteomes" id="UP000005640">
    <property type="component" value="Chromosome 7"/>
</dbReference>
<dbReference type="RNAct" id="Q9Y6D9">
    <property type="molecule type" value="protein"/>
</dbReference>
<dbReference type="Bgee" id="ENSG00000002822">
    <property type="expression patterns" value="Expressed in sural nerve and 98 other cell types or tissues"/>
</dbReference>
<dbReference type="ExpressionAtlas" id="Q9Y6D9">
    <property type="expression patterns" value="baseline and differential"/>
</dbReference>
<dbReference type="GO" id="GO:0005813">
    <property type="term" value="C:centrosome"/>
    <property type="evidence" value="ECO:0000303"/>
    <property type="project" value="UniProtKB"/>
</dbReference>
<dbReference type="GO" id="GO:0005737">
    <property type="term" value="C:cytoplasm"/>
    <property type="evidence" value="ECO:0000314"/>
    <property type="project" value="UniProtKB"/>
</dbReference>
<dbReference type="GO" id="GO:0005829">
    <property type="term" value="C:cytosol"/>
    <property type="evidence" value="ECO:0000304"/>
    <property type="project" value="Reactome"/>
</dbReference>
<dbReference type="GO" id="GO:0000776">
    <property type="term" value="C:kinetochore"/>
    <property type="evidence" value="ECO:0000314"/>
    <property type="project" value="UniProtKB"/>
</dbReference>
<dbReference type="GO" id="GO:1990706">
    <property type="term" value="C:MAD1 complex"/>
    <property type="evidence" value="ECO:0000353"/>
    <property type="project" value="ComplexPortal"/>
</dbReference>
<dbReference type="GO" id="GO:0072686">
    <property type="term" value="C:mitotic spindle"/>
    <property type="evidence" value="ECO:0000314"/>
    <property type="project" value="UniProtKB"/>
</dbReference>
<dbReference type="GO" id="GO:1990728">
    <property type="term" value="C:mitotic spindle assembly checkpoint MAD1-MAD2 complex"/>
    <property type="evidence" value="ECO:0000353"/>
    <property type="project" value="ComplexPortal"/>
</dbReference>
<dbReference type="GO" id="GO:0005635">
    <property type="term" value="C:nuclear envelope"/>
    <property type="evidence" value="ECO:0000314"/>
    <property type="project" value="UniProtKB"/>
</dbReference>
<dbReference type="GO" id="GO:0044615">
    <property type="term" value="C:nuclear pore nuclear basket"/>
    <property type="evidence" value="ECO:0000314"/>
    <property type="project" value="UniProtKB"/>
</dbReference>
<dbReference type="GO" id="GO:0005634">
    <property type="term" value="C:nucleus"/>
    <property type="evidence" value="ECO:0000314"/>
    <property type="project" value="UniProtKB"/>
</dbReference>
<dbReference type="GO" id="GO:0005819">
    <property type="term" value="C:spindle"/>
    <property type="evidence" value="ECO:0000303"/>
    <property type="project" value="UniProtKB"/>
</dbReference>
<dbReference type="GO" id="GO:0000922">
    <property type="term" value="C:spindle pole"/>
    <property type="evidence" value="ECO:0007669"/>
    <property type="project" value="UniProtKB-SubCell"/>
</dbReference>
<dbReference type="GO" id="GO:0042802">
    <property type="term" value="F:identical protein binding"/>
    <property type="evidence" value="ECO:0000353"/>
    <property type="project" value="IntAct"/>
</dbReference>
<dbReference type="GO" id="GO:0043515">
    <property type="term" value="F:kinetochore binding"/>
    <property type="evidence" value="ECO:0000314"/>
    <property type="project" value="UniProtKB"/>
</dbReference>
<dbReference type="GO" id="GO:0051315">
    <property type="term" value="P:attachment of mitotic spindle microtubules to kinetochore"/>
    <property type="evidence" value="ECO:0000318"/>
    <property type="project" value="GO_Central"/>
</dbReference>
<dbReference type="GO" id="GO:0051301">
    <property type="term" value="P:cell division"/>
    <property type="evidence" value="ECO:0007669"/>
    <property type="project" value="UniProtKB-KW"/>
</dbReference>
<dbReference type="GO" id="GO:1902426">
    <property type="term" value="P:deactivation of mitotic spindle assembly checkpoint"/>
    <property type="evidence" value="ECO:0000314"/>
    <property type="project" value="UniProtKB"/>
</dbReference>
<dbReference type="GO" id="GO:0007094">
    <property type="term" value="P:mitotic spindle assembly checkpoint signaling"/>
    <property type="evidence" value="ECO:0000314"/>
    <property type="project" value="UniProtKB"/>
</dbReference>
<dbReference type="GO" id="GO:0042130">
    <property type="term" value="P:negative regulation of T cell proliferation"/>
    <property type="evidence" value="ECO:0007669"/>
    <property type="project" value="Ensembl"/>
</dbReference>
<dbReference type="GO" id="GO:0090267">
    <property type="term" value="P:positive regulation of mitotic cell cycle spindle assembly checkpoint"/>
    <property type="evidence" value="ECO:0000314"/>
    <property type="project" value="ComplexPortal"/>
</dbReference>
<dbReference type="GO" id="GO:0090235">
    <property type="term" value="P:regulation of metaphase plate congression"/>
    <property type="evidence" value="ECO:0000314"/>
    <property type="project" value="UniProtKB"/>
</dbReference>
<dbReference type="GO" id="GO:0048538">
    <property type="term" value="P:thymus development"/>
    <property type="evidence" value="ECO:0007669"/>
    <property type="project" value="Ensembl"/>
</dbReference>
<dbReference type="FunFam" id="3.30.457.60:FF:000002">
    <property type="entry name" value="Mitotic spindle assembly checkpoint protein MAD1"/>
    <property type="match status" value="1"/>
</dbReference>
<dbReference type="FunFam" id="1.20.5.170:FF:000051">
    <property type="entry name" value="mitotic spindle assembly checkpoint protein MAD1"/>
    <property type="match status" value="1"/>
</dbReference>
<dbReference type="Gene3D" id="1.20.5.170">
    <property type="match status" value="1"/>
</dbReference>
<dbReference type="Gene3D" id="3.30.457.60">
    <property type="match status" value="1"/>
</dbReference>
<dbReference type="Gene3D" id="6.10.250.90">
    <property type="match status" value="1"/>
</dbReference>
<dbReference type="InterPro" id="IPR008672">
    <property type="entry name" value="Mad1"/>
</dbReference>
<dbReference type="PANTHER" id="PTHR23168:SF0">
    <property type="entry name" value="MITOTIC SPINDLE ASSEMBLY CHECKPOINT PROTEIN MAD1"/>
    <property type="match status" value="1"/>
</dbReference>
<dbReference type="PANTHER" id="PTHR23168">
    <property type="entry name" value="MITOTIC SPINDLE ASSEMBLY CHECKPOINT PROTEIN MAD1 MITOTIC ARREST DEFICIENT-LIKE PROTEIN 1"/>
    <property type="match status" value="1"/>
</dbReference>
<dbReference type="Pfam" id="PF05557">
    <property type="entry name" value="MAD"/>
    <property type="match status" value="1"/>
</dbReference>
<dbReference type="SUPFAM" id="SSF75704">
    <property type="entry name" value="Mitotic arrest deficient-like 1, Mad1"/>
    <property type="match status" value="1"/>
</dbReference>
<reference key="1">
    <citation type="journal article" date="1998" name="Cell">
        <title>Human T cell leukemia virus type 1 oncoprotein Tax targets the human mitotic checkpoint protein MAD1.</title>
        <authorList>
            <person name="Jin D.-Y."/>
            <person name="Spencer F."/>
            <person name="Jeang K.-T."/>
        </authorList>
    </citation>
    <scope>NUCLEOTIDE SEQUENCE [MRNA] (ISOFORM 1)</scope>
    <scope>HOMODIMERIZATION</scope>
    <scope>HETEROTETRAMERIZATION</scope>
    <scope>SUBCELLULAR LOCATION</scope>
    <scope>PHOSPHORYLATION</scope>
    <scope>INTERACTION WITH MAD2L1 AND VIRAL TAX</scope>
</reference>
<reference key="2">
    <citation type="journal article" date="1999" name="Biochem. Biophys. Res. Commun.">
        <title>Phosphorylation of human MAD1 by the BUB1 kinase in vitro.</title>
        <authorList>
            <person name="Seeley T.W."/>
            <person name="Wang L."/>
            <person name="Zhen J.Y."/>
        </authorList>
    </citation>
    <scope>NUCLEOTIDE SEQUENCE [MRNA] (ISOFORM 1)</scope>
    <scope>PHOSPHORYLATION BY BUB1</scope>
    <scope>INTERACTION WITH BUB1/BUB3 COMPLEX</scope>
    <source>
        <tissue>Testis</tissue>
    </source>
</reference>
<reference key="3">
    <citation type="journal article" date="1999" name="Genomics">
        <title>Mitotic checkpoint locus MAD1L1 maps to human chromosome 7p22 and mouse chromosome 5.</title>
        <authorList>
            <person name="Jin D.-Y."/>
            <person name="Kozak C.A."/>
            <person name="Pangilinan F."/>
            <person name="Spencer F."/>
            <person name="Green E.D."/>
            <person name="Jeang K.-T."/>
        </authorList>
    </citation>
    <scope>NUCLEOTIDE SEQUENCE [MRNA] (ISOFORM 1)</scope>
    <scope>INDUCTION</scope>
    <scope>FUNCTION</scope>
</reference>
<reference key="4">
    <citation type="journal article" date="2004" name="Nat. Genet.">
        <title>Complete sequencing and characterization of 21,243 full-length human cDNAs.</title>
        <authorList>
            <person name="Ota T."/>
            <person name="Suzuki Y."/>
            <person name="Nishikawa T."/>
            <person name="Otsuki T."/>
            <person name="Sugiyama T."/>
            <person name="Irie R."/>
            <person name="Wakamatsu A."/>
            <person name="Hayashi K."/>
            <person name="Sato H."/>
            <person name="Nagai K."/>
            <person name="Kimura K."/>
            <person name="Makita H."/>
            <person name="Sekine M."/>
            <person name="Obayashi M."/>
            <person name="Nishi T."/>
            <person name="Shibahara T."/>
            <person name="Tanaka T."/>
            <person name="Ishii S."/>
            <person name="Yamamoto J."/>
            <person name="Saito K."/>
            <person name="Kawai Y."/>
            <person name="Isono Y."/>
            <person name="Nakamura Y."/>
            <person name="Nagahari K."/>
            <person name="Murakami K."/>
            <person name="Yasuda T."/>
            <person name="Iwayanagi T."/>
            <person name="Wagatsuma M."/>
            <person name="Shiratori A."/>
            <person name="Sudo H."/>
            <person name="Hosoiri T."/>
            <person name="Kaku Y."/>
            <person name="Kodaira H."/>
            <person name="Kondo H."/>
            <person name="Sugawara M."/>
            <person name="Takahashi M."/>
            <person name="Kanda K."/>
            <person name="Yokoi T."/>
            <person name="Furuya T."/>
            <person name="Kikkawa E."/>
            <person name="Omura Y."/>
            <person name="Abe K."/>
            <person name="Kamihara K."/>
            <person name="Katsuta N."/>
            <person name="Sato K."/>
            <person name="Tanikawa M."/>
            <person name="Yamazaki M."/>
            <person name="Ninomiya K."/>
            <person name="Ishibashi T."/>
            <person name="Yamashita H."/>
            <person name="Murakawa K."/>
            <person name="Fujimori K."/>
            <person name="Tanai H."/>
            <person name="Kimata M."/>
            <person name="Watanabe M."/>
            <person name="Hiraoka S."/>
            <person name="Chiba Y."/>
            <person name="Ishida S."/>
            <person name="Ono Y."/>
            <person name="Takiguchi S."/>
            <person name="Watanabe S."/>
            <person name="Yosida M."/>
            <person name="Hotuta T."/>
            <person name="Kusano J."/>
            <person name="Kanehori K."/>
            <person name="Takahashi-Fujii A."/>
            <person name="Hara H."/>
            <person name="Tanase T.-O."/>
            <person name="Nomura Y."/>
            <person name="Togiya S."/>
            <person name="Komai F."/>
            <person name="Hara R."/>
            <person name="Takeuchi K."/>
            <person name="Arita M."/>
            <person name="Imose N."/>
            <person name="Musashino K."/>
            <person name="Yuuki H."/>
            <person name="Oshima A."/>
            <person name="Sasaki N."/>
            <person name="Aotsuka S."/>
            <person name="Yoshikawa Y."/>
            <person name="Matsunawa H."/>
            <person name="Ichihara T."/>
            <person name="Shiohata N."/>
            <person name="Sano S."/>
            <person name="Moriya S."/>
            <person name="Momiyama H."/>
            <person name="Satoh N."/>
            <person name="Takami S."/>
            <person name="Terashima Y."/>
            <person name="Suzuki O."/>
            <person name="Nakagawa S."/>
            <person name="Senoh A."/>
            <person name="Mizoguchi H."/>
            <person name="Goto Y."/>
            <person name="Shimizu F."/>
            <person name="Wakebe H."/>
            <person name="Hishigaki H."/>
            <person name="Watanabe T."/>
            <person name="Sugiyama A."/>
            <person name="Takemoto M."/>
            <person name="Kawakami B."/>
            <person name="Yamazaki M."/>
            <person name="Watanabe K."/>
            <person name="Kumagai A."/>
            <person name="Itakura S."/>
            <person name="Fukuzumi Y."/>
            <person name="Fujimori Y."/>
            <person name="Komiyama M."/>
            <person name="Tashiro H."/>
            <person name="Tanigami A."/>
            <person name="Fujiwara T."/>
            <person name="Ono T."/>
            <person name="Yamada K."/>
            <person name="Fujii Y."/>
            <person name="Ozaki K."/>
            <person name="Hirao M."/>
            <person name="Ohmori Y."/>
            <person name="Kawabata A."/>
            <person name="Hikiji T."/>
            <person name="Kobatake N."/>
            <person name="Inagaki H."/>
            <person name="Ikema Y."/>
            <person name="Okamoto S."/>
            <person name="Okitani R."/>
            <person name="Kawakami T."/>
            <person name="Noguchi S."/>
            <person name="Itoh T."/>
            <person name="Shigeta K."/>
            <person name="Senba T."/>
            <person name="Matsumura K."/>
            <person name="Nakajima Y."/>
            <person name="Mizuno T."/>
            <person name="Morinaga M."/>
            <person name="Sasaki M."/>
            <person name="Togashi T."/>
            <person name="Oyama M."/>
            <person name="Hata H."/>
            <person name="Watanabe M."/>
            <person name="Komatsu T."/>
            <person name="Mizushima-Sugano J."/>
            <person name="Satoh T."/>
            <person name="Shirai Y."/>
            <person name="Takahashi Y."/>
            <person name="Nakagawa K."/>
            <person name="Okumura K."/>
            <person name="Nagase T."/>
            <person name="Nomura N."/>
            <person name="Kikuchi H."/>
            <person name="Masuho Y."/>
            <person name="Yamashita R."/>
            <person name="Nakai K."/>
            <person name="Yada T."/>
            <person name="Nakamura Y."/>
            <person name="Ohara O."/>
            <person name="Isogai T."/>
            <person name="Sugano S."/>
        </authorList>
    </citation>
    <scope>NUCLEOTIDE SEQUENCE [LARGE SCALE MRNA] (ISOFORM 2)</scope>
    <source>
        <tissue>Amygdala</tissue>
    </source>
</reference>
<reference key="5">
    <citation type="journal article" date="2003" name="Nature">
        <title>The DNA sequence of human chromosome 7.</title>
        <authorList>
            <person name="Hillier L.W."/>
            <person name="Fulton R.S."/>
            <person name="Fulton L.A."/>
            <person name="Graves T.A."/>
            <person name="Pepin K.H."/>
            <person name="Wagner-McPherson C."/>
            <person name="Layman D."/>
            <person name="Maas J."/>
            <person name="Jaeger S."/>
            <person name="Walker R."/>
            <person name="Wylie K."/>
            <person name="Sekhon M."/>
            <person name="Becker M.C."/>
            <person name="O'Laughlin M.D."/>
            <person name="Schaller M.E."/>
            <person name="Fewell G.A."/>
            <person name="Delehaunty K.D."/>
            <person name="Miner T.L."/>
            <person name="Nash W.E."/>
            <person name="Cordes M."/>
            <person name="Du H."/>
            <person name="Sun H."/>
            <person name="Edwards J."/>
            <person name="Bradshaw-Cordum H."/>
            <person name="Ali J."/>
            <person name="Andrews S."/>
            <person name="Isak A."/>
            <person name="Vanbrunt A."/>
            <person name="Nguyen C."/>
            <person name="Du F."/>
            <person name="Lamar B."/>
            <person name="Courtney L."/>
            <person name="Kalicki J."/>
            <person name="Ozersky P."/>
            <person name="Bielicki L."/>
            <person name="Scott K."/>
            <person name="Holmes A."/>
            <person name="Harkins R."/>
            <person name="Harris A."/>
            <person name="Strong C.M."/>
            <person name="Hou S."/>
            <person name="Tomlinson C."/>
            <person name="Dauphin-Kohlberg S."/>
            <person name="Kozlowicz-Reilly A."/>
            <person name="Leonard S."/>
            <person name="Rohlfing T."/>
            <person name="Rock S.M."/>
            <person name="Tin-Wollam A.-M."/>
            <person name="Abbott A."/>
            <person name="Minx P."/>
            <person name="Maupin R."/>
            <person name="Strowmatt C."/>
            <person name="Latreille P."/>
            <person name="Miller N."/>
            <person name="Johnson D."/>
            <person name="Murray J."/>
            <person name="Woessner J.P."/>
            <person name="Wendl M.C."/>
            <person name="Yang S.-P."/>
            <person name="Schultz B.R."/>
            <person name="Wallis J.W."/>
            <person name="Spieth J."/>
            <person name="Bieri T.A."/>
            <person name="Nelson J.O."/>
            <person name="Berkowicz N."/>
            <person name="Wohldmann P.E."/>
            <person name="Cook L.L."/>
            <person name="Hickenbotham M.T."/>
            <person name="Eldred J."/>
            <person name="Williams D."/>
            <person name="Bedell J.A."/>
            <person name="Mardis E.R."/>
            <person name="Clifton S.W."/>
            <person name="Chissoe S.L."/>
            <person name="Marra M.A."/>
            <person name="Raymond C."/>
            <person name="Haugen E."/>
            <person name="Gillett W."/>
            <person name="Zhou Y."/>
            <person name="James R."/>
            <person name="Phelps K."/>
            <person name="Iadanoto S."/>
            <person name="Bubb K."/>
            <person name="Simms E."/>
            <person name="Levy R."/>
            <person name="Clendenning J."/>
            <person name="Kaul R."/>
            <person name="Kent W.J."/>
            <person name="Furey T.S."/>
            <person name="Baertsch R.A."/>
            <person name="Brent M.R."/>
            <person name="Keibler E."/>
            <person name="Flicek P."/>
            <person name="Bork P."/>
            <person name="Suyama M."/>
            <person name="Bailey J.A."/>
            <person name="Portnoy M.E."/>
            <person name="Torrents D."/>
            <person name="Chinwalla A.T."/>
            <person name="Gish W.R."/>
            <person name="Eddy S.R."/>
            <person name="McPherson J.D."/>
            <person name="Olson M.V."/>
            <person name="Eichler E.E."/>
            <person name="Green E.D."/>
            <person name="Waterston R.H."/>
            <person name="Wilson R.K."/>
        </authorList>
    </citation>
    <scope>NUCLEOTIDE SEQUENCE [LARGE SCALE GENOMIC DNA]</scope>
</reference>
<reference key="6">
    <citation type="journal article" date="2004" name="Genome Res.">
        <title>The status, quality, and expansion of the NIH full-length cDNA project: the Mammalian Gene Collection (MGC).</title>
        <authorList>
            <consortium name="The MGC Project Team"/>
        </authorList>
    </citation>
    <scope>NUCLEOTIDE SEQUENCE [LARGE SCALE MRNA] (ISOFORM 1)</scope>
    <source>
        <tissue>Pancreas</tissue>
    </source>
</reference>
<reference key="7">
    <citation type="journal article" date="2004" name="J. Biol. Chem.">
        <title>NEK2A interacts with MAD1 and possibly functions as a novel integrator of the spindle checkpoint signaling.</title>
        <authorList>
            <person name="Lou Y."/>
            <person name="Yao J."/>
            <person name="Zereshki A."/>
            <person name="Dou Z."/>
            <person name="Ahmed K."/>
            <person name="Wang H."/>
            <person name="Hu J."/>
            <person name="Wang Y."/>
            <person name="Yao X."/>
        </authorList>
    </citation>
    <scope>SUBCELLULAR LOCATION</scope>
    <scope>INTERACTION WITH NEK2</scope>
</reference>
<reference key="8">
    <citation type="journal article" date="2006" name="Nat. Biotechnol.">
        <title>A probability-based approach for high-throughput protein phosphorylation analysis and site localization.</title>
        <authorList>
            <person name="Beausoleil S.A."/>
            <person name="Villen J."/>
            <person name="Gerber S.A."/>
            <person name="Rush J."/>
            <person name="Gygi S.P."/>
        </authorList>
    </citation>
    <scope>PHOSPHORYLATION [LARGE SCALE ANALYSIS] AT SER-428</scope>
    <scope>IDENTIFICATION BY MASS SPECTROMETRY [LARGE SCALE ANALYSIS]</scope>
    <source>
        <tissue>Cervix carcinoma</tissue>
    </source>
</reference>
<reference key="9">
    <citation type="journal article" date="2007" name="Science">
        <title>ATM and ATR substrate analysis reveals extensive protein networks responsive to DNA damage.</title>
        <authorList>
            <person name="Matsuoka S."/>
            <person name="Ballif B.A."/>
            <person name="Smogorzewska A."/>
            <person name="McDonald E.R. III"/>
            <person name="Hurov K.E."/>
            <person name="Luo J."/>
            <person name="Bakalarski C.E."/>
            <person name="Zhao Z."/>
            <person name="Solimini N."/>
            <person name="Lerenthal Y."/>
            <person name="Shiloh Y."/>
            <person name="Gygi S.P."/>
            <person name="Elledge S.J."/>
        </authorList>
    </citation>
    <scope>PHOSPHORYLATION [LARGE SCALE ANALYSIS] AT SER-214</scope>
    <scope>IDENTIFICATION BY MASS SPECTROMETRY [LARGE SCALE ANALYSIS]</scope>
    <source>
        <tissue>Embryonic kidney</tissue>
    </source>
</reference>
<reference key="10">
    <citation type="journal article" date="2008" name="Cancer Res.">
        <title>Role of a novel splice variant of mitotic arrest deficient 1 (MAD1), MAD1beta, in mitotic checkpoint control in liver cancer.</title>
        <authorList>
            <person name="Sze K.M."/>
            <person name="Ching Y.P."/>
            <person name="Jin D.Y."/>
            <person name="Ng I.O."/>
        </authorList>
    </citation>
    <scope>ALTERNATIVE SPLICING (ISOFORM 3)</scope>
    <scope>FUNCTION (ISOFORM 3)</scope>
    <scope>SUBCELLULAR LOCATION (ISOFORMS 1 AND 3)</scope>
    <scope>INTERACTION WITH MAD2L1 (ISOFORMS 1 AND 3)</scope>
    <scope>TISSUE SPECIFICITY (ISOFORMS 1 AND 3)</scope>
    <scope>NUCLEAR LOCALIZATION SIGNAL</scope>
    <scope>MUTAGENESIS OF 79-LYS--ARG-82 AND 540-SER--ALA-551</scope>
</reference>
<reference key="11">
    <citation type="journal article" date="2008" name="Genes Dev.">
        <title>Tpr directly binds to Mad1 and Mad2 and is important for the Mad1-Mad2-mediated mitotic spindle checkpoint.</title>
        <authorList>
            <person name="Lee S.H."/>
            <person name="Sterling H."/>
            <person name="Burlingame A."/>
            <person name="McCormick F."/>
        </authorList>
    </citation>
    <scope>INTERACTION WITH TPR AND MAD2L1</scope>
    <scope>IDENTIFICATION BY MASS SPECTROMETRY</scope>
    <scope>SUBCELLULAR LOCATION</scope>
</reference>
<reference key="12">
    <citation type="journal article" date="2008" name="Mol. Cell">
        <title>Kinase-selective enrichment enables quantitative phosphoproteomics of the kinome across the cell cycle.</title>
        <authorList>
            <person name="Daub H."/>
            <person name="Olsen J.V."/>
            <person name="Bairlein M."/>
            <person name="Gnad F."/>
            <person name="Oppermann F.S."/>
            <person name="Korner R."/>
            <person name="Greff Z."/>
            <person name="Keri G."/>
            <person name="Stemmann O."/>
            <person name="Mann M."/>
        </authorList>
    </citation>
    <scope>IDENTIFICATION BY MASS SPECTROMETRY [LARGE SCALE ANALYSIS]</scope>
    <source>
        <tissue>Cervix carcinoma</tissue>
    </source>
</reference>
<reference key="13">
    <citation type="journal article" date="2008" name="Proc. Natl. Acad. Sci. U.S.A.">
        <title>A quantitative atlas of mitotic phosphorylation.</title>
        <authorList>
            <person name="Dephoure N."/>
            <person name="Zhou C."/>
            <person name="Villen J."/>
            <person name="Beausoleil S.A."/>
            <person name="Bakalarski C.E."/>
            <person name="Elledge S.J."/>
            <person name="Gygi S.P."/>
        </authorList>
    </citation>
    <scope>PHOSPHORYLATION [LARGE SCALE ANALYSIS] AT SER-16 AND SER-428</scope>
    <scope>IDENTIFICATION BY MASS SPECTROMETRY [LARGE SCALE ANALYSIS]</scope>
    <source>
        <tissue>Cervix carcinoma</tissue>
    </source>
</reference>
<reference key="14">
    <citation type="journal article" date="2009" name="Anal. Chem.">
        <title>Lys-N and trypsin cover complementary parts of the phosphoproteome in a refined SCX-based approach.</title>
        <authorList>
            <person name="Gauci S."/>
            <person name="Helbig A.O."/>
            <person name="Slijper M."/>
            <person name="Krijgsveld J."/>
            <person name="Heck A.J."/>
            <person name="Mohammed S."/>
        </authorList>
    </citation>
    <scope>IDENTIFICATION BY MASS SPECTROMETRY [LARGE SCALE ANALYSIS]</scope>
</reference>
<reference key="15">
    <citation type="journal article" date="2009" name="J. Cell Biol.">
        <title>Spatiotemporal control of mitosis by the conserved spindle matrix protein Megator.</title>
        <authorList>
            <person name="Lince-Faria M."/>
            <person name="Maffini S."/>
            <person name="Orr B."/>
            <person name="Ding Y."/>
            <person name="Florindo C."/>
            <person name="Sunkel C.E."/>
            <person name="Tavares A."/>
            <person name="Johansen J."/>
            <person name="Johansen K.M."/>
            <person name="Maiato H."/>
        </authorList>
    </citation>
    <scope>INTERACTION WITH TPR</scope>
</reference>
<reference key="16">
    <citation type="journal article" date="2009" name="Science">
        <title>Lysine acetylation targets protein complexes and co-regulates major cellular functions.</title>
        <authorList>
            <person name="Choudhary C."/>
            <person name="Kumar C."/>
            <person name="Gnad F."/>
            <person name="Nielsen M.L."/>
            <person name="Rehman M."/>
            <person name="Walther T.C."/>
            <person name="Olsen J.V."/>
            <person name="Mann M."/>
        </authorList>
    </citation>
    <scope>ACETYLATION [LARGE SCALE ANALYSIS] AT LYS-61</scope>
    <scope>IDENTIFICATION BY MASS SPECTROMETRY [LARGE SCALE ANALYSIS]</scope>
</reference>
<reference key="17">
    <citation type="journal article" date="2010" name="J. Biol. Chem.">
        <title>Nucleoporin translocated promoter region (Tpr) associates with dynein complex, preventing chromosome lagging formation during mitosis.</title>
        <authorList>
            <person name="Nakano H."/>
            <person name="Funasaka T."/>
            <person name="Hashizume C."/>
            <person name="Wong R.W."/>
        </authorList>
    </citation>
    <scope>FUNCTION</scope>
    <scope>INTERACTION WITH TPR</scope>
    <scope>SUBCELLULAR LOCATION</scope>
</reference>
<reference key="18">
    <citation type="journal article" date="2010" name="Sci. Signal.">
        <title>Quantitative phosphoproteomics reveals widespread full phosphorylation site occupancy during mitosis.</title>
        <authorList>
            <person name="Olsen J.V."/>
            <person name="Vermeulen M."/>
            <person name="Santamaria A."/>
            <person name="Kumar C."/>
            <person name="Miller M.L."/>
            <person name="Jensen L.J."/>
            <person name="Gnad F."/>
            <person name="Cox J."/>
            <person name="Jensen T.S."/>
            <person name="Nigg E.A."/>
            <person name="Brunak S."/>
            <person name="Mann M."/>
        </authorList>
    </citation>
    <scope>PHOSPHORYLATION [LARGE SCALE ANALYSIS] AT SER-428</scope>
    <scope>IDENTIFICATION BY MASS SPECTROMETRY [LARGE SCALE ANALYSIS]</scope>
    <source>
        <tissue>Cervix carcinoma</tissue>
    </source>
</reference>
<reference key="19">
    <citation type="journal article" date="2011" name="BMC Syst. Biol.">
        <title>Initial characterization of the human central proteome.</title>
        <authorList>
            <person name="Burkard T.R."/>
            <person name="Planyavsky M."/>
            <person name="Kaupe I."/>
            <person name="Breitwieser F.P."/>
            <person name="Buerckstuemmer T."/>
            <person name="Bennett K.L."/>
            <person name="Superti-Furga G."/>
            <person name="Colinge J."/>
        </authorList>
    </citation>
    <scope>IDENTIFICATION BY MASS SPECTROMETRY [LARGE SCALE ANALYSIS]</scope>
</reference>
<reference key="20">
    <citation type="journal article" date="2012" name="J. Biol. Chem.">
        <title>RED, a spindle pole-associated protein, is required for kinetochore localization of MAD1, mitotic progression, and activation of the spindle assembly checkpoint.</title>
        <authorList>
            <person name="Yeh P.C."/>
            <person name="Yeh C.C."/>
            <person name="Chen Y.C."/>
            <person name="Juang Y.L."/>
        </authorList>
    </citation>
    <scope>SUBCELLULAR LOCATION</scope>
    <scope>INTERACTION WITH IK AND MAD2L1</scope>
</reference>
<reference key="21">
    <citation type="journal article" date="2012" name="Mol. Cell. Proteomics">
        <title>Comparative large-scale characterisation of plant vs. mammal proteins reveals similar and idiosyncratic N-alpha acetylation features.</title>
        <authorList>
            <person name="Bienvenut W.V."/>
            <person name="Sumpton D."/>
            <person name="Martinez A."/>
            <person name="Lilla S."/>
            <person name="Espagne C."/>
            <person name="Meinnel T."/>
            <person name="Giglione C."/>
        </authorList>
    </citation>
    <scope>ACETYLATION [LARGE SCALE ANALYSIS] AT MET-1</scope>
    <scope>IDENTIFICATION BY MASS SPECTROMETRY [LARGE SCALE ANALYSIS]</scope>
</reference>
<reference key="22">
    <citation type="journal article" date="2012" name="Proc. Natl. Acad. Sci. U.S.A.">
        <title>N-terminal acetylome analyses and functional insights of the N-terminal acetyltransferase NatB.</title>
        <authorList>
            <person name="Van Damme P."/>
            <person name="Lasa M."/>
            <person name="Polevoda B."/>
            <person name="Gazquez C."/>
            <person name="Elosegui-Artola A."/>
            <person name="Kim D.S."/>
            <person name="De Juan-Pardo E."/>
            <person name="Demeyer K."/>
            <person name="Hole K."/>
            <person name="Larrea E."/>
            <person name="Timmerman E."/>
            <person name="Prieto J."/>
            <person name="Arnesen T."/>
            <person name="Sherman F."/>
            <person name="Gevaert K."/>
            <person name="Aldabe R."/>
        </authorList>
    </citation>
    <scope>ACETYLATION [LARGE SCALE ANALYSIS] AT MET-1</scope>
    <scope>IDENTIFICATION BY MASS SPECTROMETRY [LARGE SCALE ANALYSIS]</scope>
</reference>
<reference key="23">
    <citation type="journal article" date="2014" name="J. Pathol.">
        <title>Proline-rich acidic protein 1 (PRAP1) is a novel interacting partner of MAD1 and has a suppressive role in mitotic checkpoint signalling in hepatocellular carcinoma.</title>
        <authorList>
            <person name="Sze K.M."/>
            <person name="Chu G.K."/>
            <person name="Mak Q.H."/>
            <person name="Lee J.M."/>
            <person name="Ng I.O."/>
        </authorList>
    </citation>
    <scope>INTERACTION WITH PRAP1</scope>
    <scope>TISSUE SPECIFICITY</scope>
</reference>
<reference key="24">
    <citation type="journal article" date="2013" name="J. Proteome Res.">
        <title>Toward a comprehensive characterization of a human cancer cell phosphoproteome.</title>
        <authorList>
            <person name="Zhou H."/>
            <person name="Di Palma S."/>
            <person name="Preisinger C."/>
            <person name="Peng M."/>
            <person name="Polat A.N."/>
            <person name="Heck A.J."/>
            <person name="Mohammed S."/>
        </authorList>
    </citation>
    <scope>PHOSPHORYLATION [LARGE SCALE ANALYSIS] AT SER-16 AND SER-428</scope>
    <scope>IDENTIFICATION BY MASS SPECTROMETRY [LARGE SCALE ANALYSIS]</scope>
    <source>
        <tissue>Cervix carcinoma</tissue>
        <tissue>Erythroleukemia</tissue>
    </source>
</reference>
<reference key="25">
    <citation type="journal article" date="2014" name="Nat. Struct. Mol. Biol.">
        <title>Uncovering global SUMOylation signaling networks in a site-specific manner.</title>
        <authorList>
            <person name="Hendriks I.A."/>
            <person name="D'Souza R.C."/>
            <person name="Yang B."/>
            <person name="Verlaan-de Vries M."/>
            <person name="Mann M."/>
            <person name="Vertegaal A.C."/>
        </authorList>
    </citation>
    <scope>SUMOYLATION [LARGE SCALE ANALYSIS] AT LYS-61</scope>
    <scope>IDENTIFICATION BY MASS SPECTROMETRY [LARGE SCALE ANALYSIS]</scope>
</reference>
<reference key="26">
    <citation type="journal article" date="2017" name="Nat. Struct. Mol. Biol.">
        <title>Site-specific mapping of the human SUMO proteome reveals co-modification with phosphorylation.</title>
        <authorList>
            <person name="Hendriks I.A."/>
            <person name="Lyon D."/>
            <person name="Young C."/>
            <person name="Jensen L.J."/>
            <person name="Vertegaal A.C."/>
            <person name="Nielsen M.L."/>
        </authorList>
    </citation>
    <scope>SUMOYLATION [LARGE SCALE ANALYSIS] AT LYS-61</scope>
    <scope>IDENTIFICATION BY MASS SPECTROMETRY [LARGE SCALE ANALYSIS]</scope>
</reference>
<reference key="27">
    <citation type="journal article" date="2018" name="J. Biol. Chem.">
        <title>Direct interactions of mitotic arrest deficient 1 (MAD1) domains with each other and MAD2 conformers are required for mitotic checkpoint signaling.</title>
        <authorList>
            <person name="Ji W."/>
            <person name="Luo Y."/>
            <person name="Ahmad E."/>
            <person name="Liu S.T."/>
        </authorList>
    </citation>
    <scope>FUNCTION</scope>
    <scope>SUBUNIT</scope>
    <scope>INTERACTION WITH MAD2L1 AND TTK</scope>
    <scope>SUBCELLULAR LOCATION</scope>
    <scope>PHOSPHORYLATION AT SER-598; SER-610; TYR-634 AND THR-716</scope>
    <scope>MUTAGENESIS OF 1-MET--SER-485; LYS-541; LEU-543; 597-SER--ALA-718; SER-598; SER-610; TYR-634 AND THR-716</scope>
</reference>
<reference key="28">
    <citation type="journal article" date="2002" name="EMBO J.">
        <title>Crystal structure of the tetrameric Mad1-Mad2 core complex: implications of a 'safety belt' binding mechanism for the spindle checkpoint.</title>
        <authorList>
            <person name="Sironi L."/>
            <person name="Mapelli M."/>
            <person name="Knapp S."/>
            <person name="De Antoni A."/>
            <person name="Jeang K.-T."/>
            <person name="Musacchio A."/>
        </authorList>
    </citation>
    <scope>X-RAY CRYSTALLOGRAPHY (2.05 ANGSTROMS) OF 493-579 IN COMPLEX WITH MAD2L1</scope>
    <scope>COMPETITIVE INHIBITOR OF MAD2L1-CDC20 INTERACTION</scope>
</reference>
<reference key="29">
    <citation type="journal article" date="1999" name="Genomics">
        <title>Characterization of MAD2B and other mitotic spindle checkpoint genes.</title>
        <authorList>
            <person name="Cahill D.P."/>
            <person name="da Costa L.T."/>
            <person name="Carson-Walter E.B."/>
            <person name="Kinzler K.W."/>
            <person name="Vogelstein B."/>
            <person name="Lengauer C."/>
        </authorList>
    </citation>
    <scope>VARIANTS HIS-558 AND HIS-572</scope>
</reference>
<reference key="30">
    <citation type="journal article" date="1999" name="Oncogene">
        <title>Search for in vivo somatic mutations in the mitotic checkpoint gene, hMAD1, in human lung cancers.</title>
        <authorList>
            <person name="Nomoto S."/>
            <person name="Haruki N."/>
            <person name="Takahashi T."/>
            <person name="Masuda A."/>
            <person name="Koshikawa T."/>
            <person name="Takahashi T."/>
            <person name="Fujii Y."/>
            <person name="Osada H."/>
            <person name="Takahashi T."/>
        </authorList>
    </citation>
    <scope>VARIANT LUNG CANCER ALA-299</scope>
    <scope>VARIANTS SER-160; MET-500; LYS-511; HIS-556 AND HIS-558</scope>
</reference>
<reference key="31">
    <citation type="journal article" date="2001" name="Oncogene">
        <title>Mutations in the mitotic check point gene, MAD1L1, in human cancers.</title>
        <authorList>
            <person name="Tsukasaki K."/>
            <person name="Miller C.W."/>
            <person name="Greenspun E."/>
            <person name="Eshaghian S."/>
            <person name="Kawabata H."/>
            <person name="Fujimoto T."/>
            <person name="Tomonaga M."/>
            <person name="Sawyers C."/>
            <person name="Said J.W."/>
            <person name="Koeffler H.P."/>
        </authorList>
    </citation>
    <scope>VARIANTS CANCER LEU-29; CYS-59; GLN-360; LYS-516; CYS-556 AND LYS-569</scope>
    <scope>VARIANTS MET-500 AND HIS-558</scope>
</reference>
<reference key="32">
    <citation type="journal article" date="2022" name="Sci. Adv.">
        <title>Biallelic germline mutations in MAD1L1 induce a syndrome of aneuploidy with high tumor susceptibility.</title>
        <authorList>
            <person name="Villarroya-Beltri C."/>
            <person name="Osorio A."/>
            <person name="Torres-Ruiz R."/>
            <person name="Gomez-Sanchez D."/>
            <person name="Trakala M."/>
            <person name="Sanchez-Belmonte A."/>
            <person name="Mercadillo F."/>
            <person name="Hurtado B."/>
            <person name="Pitarch B."/>
            <person name="Hernandez-Nunez A."/>
            <person name="Gomez-Caturla A."/>
            <person name="Rueda D."/>
            <person name="Perea J."/>
            <person name="Rodriguez-Perales S."/>
            <person name="Malumbres M."/>
            <person name="Urioste M."/>
        </authorList>
    </citation>
    <scope>INVOLVEMENT IN MVA7</scope>
    <scope>VARIANTS MVA7 66-GLN--ALA-718 DEL AND 628-GLU--ALA-718 DEL</scope>
    <scope>CHARACTERIZATION OF VARIANTS MVA7 66-GLN--ALA-718 DEL AND 628-GLU--ALA-718 DEL</scope>
    <scope>FUNCTION</scope>
</reference>
<organism>
    <name type="scientific">Homo sapiens</name>
    <name type="common">Human</name>
    <dbReference type="NCBI Taxonomy" id="9606"/>
    <lineage>
        <taxon>Eukaryota</taxon>
        <taxon>Metazoa</taxon>
        <taxon>Chordata</taxon>
        <taxon>Craniata</taxon>
        <taxon>Vertebrata</taxon>
        <taxon>Euteleostomi</taxon>
        <taxon>Mammalia</taxon>
        <taxon>Eutheria</taxon>
        <taxon>Euarchontoglires</taxon>
        <taxon>Primates</taxon>
        <taxon>Haplorrhini</taxon>
        <taxon>Catarrhini</taxon>
        <taxon>Hominidae</taxon>
        <taxon>Homo</taxon>
    </lineage>
</organism>
<feature type="chain" id="PRO_0000213800" description="Mitotic spindle assembly checkpoint protein MAD1">
    <location>
        <begin position="1"/>
        <end position="718"/>
    </location>
</feature>
<feature type="region of interest" description="Important for interaction with IK" evidence="13">
    <location>
        <begin position="301"/>
        <end position="340"/>
    </location>
</feature>
<feature type="region of interest" description="Necessary for interaction with NEK2" evidence="8">
    <location>
        <begin position="380"/>
        <end position="532"/>
    </location>
</feature>
<feature type="region of interest" description="Important for interaction with IK" evidence="13">
    <location>
        <begin position="439"/>
        <end position="480"/>
    </location>
</feature>
<feature type="region of interest" description="Necessary for interaction with MAD2L1" evidence="10">
    <location>
        <begin position="540"/>
        <end position="551"/>
    </location>
</feature>
<feature type="coiled-coil region" evidence="1">
    <location>
        <begin position="46"/>
        <end position="632"/>
    </location>
</feature>
<feature type="short sequence motif" description="Nuclear localization signal" evidence="10">
    <location>
        <begin position="79"/>
        <end position="82"/>
    </location>
</feature>
<feature type="modified residue" description="N-acetylmethionine" evidence="27 28">
    <location>
        <position position="1"/>
    </location>
</feature>
<feature type="modified residue" description="Phosphoserine" evidence="24 29">
    <location>
        <position position="16"/>
    </location>
</feature>
<feature type="modified residue" description="N6-acetyllysine; alternate" evidence="25">
    <location>
        <position position="61"/>
    </location>
</feature>
<feature type="modified residue" description="Phosphoserine" evidence="23">
    <location>
        <position position="214"/>
    </location>
</feature>
<feature type="modified residue" description="Phosphoserine" evidence="22 24 26 29">
    <location>
        <position position="428"/>
    </location>
</feature>
<feature type="modified residue" description="Phosphoserine" evidence="21">
    <location>
        <position position="598"/>
    </location>
</feature>
<feature type="modified residue" description="Phosphoserine" evidence="21">
    <location>
        <position position="610"/>
    </location>
</feature>
<feature type="modified residue" description="Phosphotyrosine" evidence="21">
    <location>
        <position position="634"/>
    </location>
</feature>
<feature type="modified residue" description="Phosphothreonine" evidence="21">
    <location>
        <position position="716"/>
    </location>
</feature>
<feature type="cross-link" description="Glycyl lysine isopeptide (Lys-Gly) (interchain with G-Cter in SUMO2); alternate" evidence="30 31">
    <location>
        <position position="61"/>
    </location>
</feature>
<feature type="splice variant" id="VSP_056160" description="In isoform 2." evidence="18">
    <original>MEDLGENTMVLSTLRSLNNFISQRVEGGSGLDISTSAPGSLQMQYQQSMQLEERAEQIRSKSHLI</original>
    <variation>MLPARGCVRKRTVWPRLARVLIVTLLTLELSYAPLPCQLSGVPYNTGDPVGRWARPCIWPCPWHT</variation>
    <location>
        <begin position="1"/>
        <end position="65"/>
    </location>
</feature>
<feature type="splice variant" id="VSP_061075" description="In isoform 3." evidence="19">
    <location>
        <begin position="51"/>
        <end position="97"/>
    </location>
</feature>
<feature type="splice variant" id="VSP_056161" description="In isoform 2." evidence="18">
    <location>
        <begin position="66"/>
        <end position="157"/>
    </location>
</feature>
<feature type="sequence variant" id="VAR_019707" description="In a lymphoid cancer cell line; somatic mutation." evidence="6">
    <original>S</original>
    <variation>L</variation>
    <location>
        <position position="29"/>
    </location>
</feature>
<feature type="sequence variant" id="VAR_019708" description="In a prostate cancer cell line; somatic mutation; dbSNP:rs121908982." evidence="6">
    <original>R</original>
    <variation>C</variation>
    <location>
        <position position="59"/>
    </location>
</feature>
<feature type="sequence variant" id="VAR_087991" description="In MVA7; decreased protein abundance in cells from the patient and from his heterozygous parents." evidence="16">
    <location>
        <begin position="66"/>
        <end position="718"/>
    </location>
</feature>
<feature type="sequence variant" id="VAR_019709" description="In dbSNP:rs550573452." evidence="5">
    <original>N</original>
    <variation>S</variation>
    <location>
        <position position="160"/>
    </location>
</feature>
<feature type="sequence variant" id="VAR_019710" description="In lung cancer cell line; somatic mutation." evidence="5">
    <original>T</original>
    <variation>A</variation>
    <location>
        <position position="299"/>
    </location>
</feature>
<feature type="sequence variant" id="VAR_019711" description="In a prostate cancer cell line; somatic mutation; dbSNP:rs769418574." evidence="6">
    <original>R</original>
    <variation>Q</variation>
    <location>
        <position position="360"/>
    </location>
</feature>
<feature type="sequence variant" id="VAR_019712" description="In dbSNP:rs193231481." evidence="5 6">
    <original>T</original>
    <variation>M</variation>
    <location>
        <position position="500"/>
    </location>
</feature>
<feature type="sequence variant" id="VAR_019713" description="In dbSNP:rs377555260." evidence="5">
    <original>E</original>
    <variation>K</variation>
    <location>
        <position position="511"/>
    </location>
</feature>
<feature type="sequence variant" id="VAR_019714" description="In a breast cancer cell line; somatic mutation." evidence="6">
    <original>E</original>
    <variation>K</variation>
    <location>
        <position position="516"/>
    </location>
</feature>
<feature type="sequence variant" id="VAR_019715" description="In a prostate cancer cell line; somatic mutation; dbSNP:rs371561369." evidence="6">
    <original>R</original>
    <variation>C</variation>
    <location>
        <position position="556"/>
    </location>
</feature>
<feature type="sequence variant" id="VAR_019716" description="In one individual with lung cancer; dbSNP:rs755012008." evidence="5">
    <original>R</original>
    <variation>H</variation>
    <location>
        <position position="556"/>
    </location>
</feature>
<feature type="sequence variant" id="VAR_019717" description="In a cancer cell line; dbSNP:rs1801368." evidence="4 5 6">
    <original>R</original>
    <variation>H</variation>
    <location>
        <position position="558"/>
    </location>
</feature>
<feature type="sequence variant" id="VAR_019718" description="In a breast cancer cell line; somatic mutation; dbSNP:rs201951163." evidence="6">
    <original>E</original>
    <variation>K</variation>
    <location>
        <position position="569"/>
    </location>
</feature>
<feature type="sequence variant" id="VAR_019719" description="In a cancer cell line; dbSNP:rs1801500." evidence="4">
    <original>R</original>
    <variation>H</variation>
    <location>
        <position position="572"/>
    </location>
</feature>
<feature type="sequence variant" id="VAR_087992" description="In MVA7; decreased protein abundance in cells from the patient and from his heterozygous parents." evidence="16">
    <location>
        <begin position="628"/>
        <end position="718"/>
    </location>
</feature>
<feature type="mutagenesis site" description="Defective dimerization. Abolishes binding to the closed and open conformations of MAD2L1. Impairs mitotic checkpoint signaling abolishing mitotic arrest, and shortens the duration of mitosis." evidence="15">
    <location>
        <begin position="1"/>
        <end position="485"/>
    </location>
</feature>
<feature type="mutagenesis site" description="Loss of nuclear localization." evidence="10">
    <original>KRAR</original>
    <variation>LLAL</variation>
    <location>
        <begin position="79"/>
        <end position="82"/>
    </location>
</feature>
<feature type="mutagenesis site" description="Loss of interaction with MAD2L1." evidence="10">
    <location>
        <begin position="540"/>
        <end position="551"/>
    </location>
</feature>
<feature type="mutagenesis site" description="Abolishes binding to closed and open conformations of MAD2L1 and impairs mitotic checkpint signaling abolishing mitotic arrest, and shortens the duration of mitosis; in association with A-543." evidence="15">
    <original>K</original>
    <variation>A</variation>
    <location>
        <position position="541"/>
    </location>
</feature>
<feature type="mutagenesis site" description="Abolishes binding to closed and open conformations of MAD2L1 and impairs mitotic checkpoint signaling abolishing mitotic arrest, and shortens the duration of mitosis; in association with A-541." evidence="15">
    <original>L</original>
    <variation>A</variation>
    <location>
        <position position="543"/>
    </location>
</feature>
<feature type="mutagenesis site" description="Defective dimerization. Reduces binding to the closed and open conformations of MAD2L1. Impairs mitotic checkpoint signaling abolishing mitotic arrest, and shortens the duration of mitosis." evidence="15">
    <location>
        <begin position="597"/>
        <end position="718"/>
    </location>
</feature>
<feature type="mutagenesis site" description="Does not impact the duration of mitosis." evidence="15">
    <original>S</original>
    <variation>A</variation>
    <variation>E</variation>
    <location>
        <position position="598"/>
    </location>
</feature>
<feature type="mutagenesis site" description="Impairs mitotic checkpoint signaling and shortens the duration of mitosis." evidence="15">
    <original>S</original>
    <variation>A</variation>
    <variation>E</variation>
    <location>
        <position position="610"/>
    </location>
</feature>
<feature type="mutagenesis site" description="Reduces binding to closed and open conformations of MAD2L1. Impairs mitotic checkpoint signaling abolishing mitotic arrest, and shortens the duration of mitosis." evidence="15">
    <original>Y</original>
    <variation>E</variation>
    <location>
        <position position="634"/>
    </location>
</feature>
<feature type="mutagenesis site" description="Reduces binding to closed and open conformations of MAD2L1. Does not impact the duration of mitosis." evidence="15">
    <original>Y</original>
    <variation>F</variation>
    <location>
        <position position="634"/>
    </location>
</feature>
<feature type="mutagenesis site" description="Reduces binding to closed and open conformations of MAD2L1. Impairs mitotic checkpoint signaling and shortens the duration of mitosis." evidence="15">
    <original>T</original>
    <variation>A</variation>
    <variation>E</variation>
    <location>
        <position position="716"/>
    </location>
</feature>
<feature type="sequence conflict" description="In Ref. 1; AAC52059 and 3; AAD24498." evidence="20" ref="1 3">
    <original>EL</original>
    <variation>DV</variation>
    <location>
        <begin position="189"/>
        <end position="190"/>
    </location>
</feature>
<feature type="sequence conflict" description="In Ref. 1; AAC52059 and 3; AAD24498." evidence="20" ref="1 3">
    <original>K</original>
    <variation>E</variation>
    <location>
        <position position="260"/>
    </location>
</feature>
<feature type="sequence conflict" description="In Ref. 1; AAC52059." evidence="20" ref="1">
    <location>
        <position position="268"/>
    </location>
</feature>
<feature type="helix" evidence="32">
    <location>
        <begin position="487"/>
        <end position="492"/>
    </location>
</feature>
<feature type="helix" evidence="32">
    <location>
        <begin position="494"/>
        <end position="528"/>
    </location>
</feature>
<feature type="turn" evidence="32">
    <location>
        <begin position="537"/>
        <end position="539"/>
    </location>
</feature>
<feature type="strand" evidence="32">
    <location>
        <begin position="540"/>
        <end position="547"/>
    </location>
</feature>
<feature type="helix" evidence="32">
    <location>
        <begin position="549"/>
        <end position="575"/>
    </location>
</feature>
<feature type="turn" evidence="32">
    <location>
        <begin position="580"/>
        <end position="582"/>
    </location>
</feature>
<feature type="helix" evidence="33">
    <location>
        <begin position="598"/>
        <end position="637"/>
    </location>
</feature>
<feature type="strand" evidence="33">
    <location>
        <begin position="638"/>
        <end position="643"/>
    </location>
</feature>
<feature type="strand" evidence="33">
    <location>
        <begin position="647"/>
        <end position="653"/>
    </location>
</feature>
<feature type="strand" evidence="35">
    <location>
        <begin position="657"/>
        <end position="660"/>
    </location>
</feature>
<feature type="strand" evidence="33">
    <location>
        <begin position="663"/>
        <end position="667"/>
    </location>
</feature>
<feature type="strand" evidence="34">
    <location>
        <begin position="670"/>
        <end position="672"/>
    </location>
</feature>
<feature type="strand" evidence="33">
    <location>
        <begin position="675"/>
        <end position="677"/>
    </location>
</feature>
<feature type="helix" evidence="33">
    <location>
        <begin position="681"/>
        <end position="685"/>
    </location>
</feature>
<feature type="helix" evidence="33">
    <location>
        <begin position="687"/>
        <end position="693"/>
    </location>
</feature>
<feature type="turn" evidence="33">
    <location>
        <begin position="694"/>
        <end position="696"/>
    </location>
</feature>
<feature type="helix" evidence="33">
    <location>
        <begin position="700"/>
        <end position="715"/>
    </location>
</feature>